<comment type="function">
    <text evidence="1">Specifically methylates guanosine-37 in various tRNAs.</text>
</comment>
<comment type="catalytic activity">
    <reaction evidence="1">
        <text>guanosine(37) in tRNA + S-adenosyl-L-methionine = N(1)-methylguanosine(37) in tRNA + S-adenosyl-L-homocysteine + H(+)</text>
        <dbReference type="Rhea" id="RHEA:36899"/>
        <dbReference type="Rhea" id="RHEA-COMP:10145"/>
        <dbReference type="Rhea" id="RHEA-COMP:10147"/>
        <dbReference type="ChEBI" id="CHEBI:15378"/>
        <dbReference type="ChEBI" id="CHEBI:57856"/>
        <dbReference type="ChEBI" id="CHEBI:59789"/>
        <dbReference type="ChEBI" id="CHEBI:73542"/>
        <dbReference type="ChEBI" id="CHEBI:74269"/>
        <dbReference type="EC" id="2.1.1.228"/>
    </reaction>
</comment>
<comment type="subunit">
    <text evidence="1">Homodimer.</text>
</comment>
<comment type="subcellular location">
    <subcellularLocation>
        <location evidence="1">Cytoplasm</location>
    </subcellularLocation>
</comment>
<comment type="similarity">
    <text evidence="1">Belongs to the RNA methyltransferase TrmD family.</text>
</comment>
<evidence type="ECO:0000255" key="1">
    <source>
        <dbReference type="HAMAP-Rule" id="MF_00605"/>
    </source>
</evidence>
<organism>
    <name type="scientific">Streptococcus pneumoniae serotype 19F (strain G54)</name>
    <dbReference type="NCBI Taxonomy" id="512566"/>
    <lineage>
        <taxon>Bacteria</taxon>
        <taxon>Bacillati</taxon>
        <taxon>Bacillota</taxon>
        <taxon>Bacilli</taxon>
        <taxon>Lactobacillales</taxon>
        <taxon>Streptococcaceae</taxon>
        <taxon>Streptococcus</taxon>
    </lineage>
</organism>
<dbReference type="EC" id="2.1.1.228" evidence="1"/>
<dbReference type="EMBL" id="CP001015">
    <property type="protein sequence ID" value="ACF55540.1"/>
    <property type="molecule type" value="Genomic_DNA"/>
</dbReference>
<dbReference type="SMR" id="B5E3G1"/>
<dbReference type="KEGG" id="spx:SPG_0709"/>
<dbReference type="HOGENOM" id="CLU_047363_0_1_9"/>
<dbReference type="GO" id="GO:0005829">
    <property type="term" value="C:cytosol"/>
    <property type="evidence" value="ECO:0007669"/>
    <property type="project" value="TreeGrafter"/>
</dbReference>
<dbReference type="GO" id="GO:0052906">
    <property type="term" value="F:tRNA (guanine(37)-N1)-methyltransferase activity"/>
    <property type="evidence" value="ECO:0007669"/>
    <property type="project" value="UniProtKB-UniRule"/>
</dbReference>
<dbReference type="GO" id="GO:0002939">
    <property type="term" value="P:tRNA N1-guanine methylation"/>
    <property type="evidence" value="ECO:0007669"/>
    <property type="project" value="TreeGrafter"/>
</dbReference>
<dbReference type="CDD" id="cd18080">
    <property type="entry name" value="TrmD-like"/>
    <property type="match status" value="1"/>
</dbReference>
<dbReference type="FunFam" id="1.10.1270.20:FF:000001">
    <property type="entry name" value="tRNA (guanine-N(1)-)-methyltransferase"/>
    <property type="match status" value="1"/>
</dbReference>
<dbReference type="FunFam" id="3.40.1280.10:FF:000001">
    <property type="entry name" value="tRNA (guanine-N(1)-)-methyltransferase"/>
    <property type="match status" value="1"/>
</dbReference>
<dbReference type="Gene3D" id="3.40.1280.10">
    <property type="match status" value="1"/>
</dbReference>
<dbReference type="Gene3D" id="1.10.1270.20">
    <property type="entry name" value="tRNA(m1g37)methyltransferase, domain 2"/>
    <property type="match status" value="1"/>
</dbReference>
<dbReference type="HAMAP" id="MF_00605">
    <property type="entry name" value="TrmD"/>
    <property type="match status" value="1"/>
</dbReference>
<dbReference type="InterPro" id="IPR029028">
    <property type="entry name" value="Alpha/beta_knot_MTases"/>
</dbReference>
<dbReference type="InterPro" id="IPR023148">
    <property type="entry name" value="tRNA_m1G_MeTrfase_C_sf"/>
</dbReference>
<dbReference type="InterPro" id="IPR002649">
    <property type="entry name" value="tRNA_m1G_MeTrfase_TrmD"/>
</dbReference>
<dbReference type="InterPro" id="IPR029026">
    <property type="entry name" value="tRNA_m1G_MTases_N"/>
</dbReference>
<dbReference type="InterPro" id="IPR016009">
    <property type="entry name" value="tRNA_MeTrfase_TRMD/TRM10"/>
</dbReference>
<dbReference type="NCBIfam" id="NF000648">
    <property type="entry name" value="PRK00026.1"/>
    <property type="match status" value="1"/>
</dbReference>
<dbReference type="NCBIfam" id="TIGR00088">
    <property type="entry name" value="trmD"/>
    <property type="match status" value="1"/>
</dbReference>
<dbReference type="PANTHER" id="PTHR46417">
    <property type="entry name" value="TRNA (GUANINE-N(1)-)-METHYLTRANSFERASE"/>
    <property type="match status" value="1"/>
</dbReference>
<dbReference type="PANTHER" id="PTHR46417:SF1">
    <property type="entry name" value="TRNA (GUANINE-N(1)-)-METHYLTRANSFERASE"/>
    <property type="match status" value="1"/>
</dbReference>
<dbReference type="Pfam" id="PF01746">
    <property type="entry name" value="tRNA_m1G_MT"/>
    <property type="match status" value="1"/>
</dbReference>
<dbReference type="PIRSF" id="PIRSF000386">
    <property type="entry name" value="tRNA_mtase"/>
    <property type="match status" value="1"/>
</dbReference>
<dbReference type="SUPFAM" id="SSF75217">
    <property type="entry name" value="alpha/beta knot"/>
    <property type="match status" value="1"/>
</dbReference>
<proteinExistence type="inferred from homology"/>
<protein>
    <recommendedName>
        <fullName evidence="1">tRNA (guanine-N(1)-)-methyltransferase</fullName>
        <ecNumber evidence="1">2.1.1.228</ecNumber>
    </recommendedName>
    <alternativeName>
        <fullName evidence="1">M1G-methyltransferase</fullName>
    </alternativeName>
    <alternativeName>
        <fullName evidence="1">tRNA [GM37] methyltransferase</fullName>
    </alternativeName>
</protein>
<name>TRMD_STRP4</name>
<accession>B5E3G1</accession>
<feature type="chain" id="PRO_1000130214" description="tRNA (guanine-N(1)-)-methyltransferase">
    <location>
        <begin position="1"/>
        <end position="239"/>
    </location>
</feature>
<feature type="binding site" evidence="1">
    <location>
        <position position="108"/>
    </location>
    <ligand>
        <name>S-adenosyl-L-methionine</name>
        <dbReference type="ChEBI" id="CHEBI:59789"/>
    </ligand>
</feature>
<feature type="binding site" evidence="1">
    <location>
        <begin position="127"/>
        <end position="132"/>
    </location>
    <ligand>
        <name>S-adenosyl-L-methionine</name>
        <dbReference type="ChEBI" id="CHEBI:59789"/>
    </ligand>
</feature>
<sequence length="239" mass="27633">MKIDILTLFPEMFSPLEHSIVGKAREKGLLDIQYHNFRENAEKARHVDDEPYGGGQGMLLRAQPIFDSFDAIEKKNPRVILLDPAGKQFDQAYAEDLAQEEELIFICGHYEGYDERIKTLVTDEISLGDYVLTGGELAAMTMIDATVRLIPEVIGKESSHQDDSFSSGLLEYPQYTRPYDYRGMVVPDVLMSGHHEKIRQWRLYESLKKTYERRPDLLEHYQLTVEEEKMLAEIKENKE</sequence>
<gene>
    <name evidence="1" type="primary">trmD</name>
    <name type="ordered locus">SPG_0709</name>
</gene>
<reference key="1">
    <citation type="journal article" date="2001" name="Microb. Drug Resist.">
        <title>Annotated draft genomic sequence from a Streptococcus pneumoniae type 19F clinical isolate.</title>
        <authorList>
            <person name="Dopazo J."/>
            <person name="Mendoza A."/>
            <person name="Herrero J."/>
            <person name="Caldara F."/>
            <person name="Humbert Y."/>
            <person name="Friedli L."/>
            <person name="Guerrier M."/>
            <person name="Grand-Schenk E."/>
            <person name="Gandin C."/>
            <person name="de Francesco M."/>
            <person name="Polissi A."/>
            <person name="Buell G."/>
            <person name="Feger G."/>
            <person name="Garcia E."/>
            <person name="Peitsch M."/>
            <person name="Garcia-Bustos J.F."/>
        </authorList>
    </citation>
    <scope>NUCLEOTIDE SEQUENCE [LARGE SCALE GENOMIC DNA]</scope>
    <source>
        <strain>G54</strain>
    </source>
</reference>
<reference key="2">
    <citation type="submission" date="2008-03" db="EMBL/GenBank/DDBJ databases">
        <title>Pneumococcal beta glucoside metabolism investigated by whole genome comparison.</title>
        <authorList>
            <person name="Mulas L."/>
            <person name="Trappetti C."/>
            <person name="Hakenbeck R."/>
            <person name="Iannelli F."/>
            <person name="Pozzi G."/>
            <person name="Davidsen T.M."/>
            <person name="Tettelin H."/>
            <person name="Oggioni M."/>
        </authorList>
    </citation>
    <scope>NUCLEOTIDE SEQUENCE [LARGE SCALE GENOMIC DNA]</scope>
    <source>
        <strain>G54</strain>
    </source>
</reference>
<keyword id="KW-0963">Cytoplasm</keyword>
<keyword id="KW-0489">Methyltransferase</keyword>
<keyword id="KW-0949">S-adenosyl-L-methionine</keyword>
<keyword id="KW-0808">Transferase</keyword>
<keyword id="KW-0819">tRNA processing</keyword>